<evidence type="ECO:0000255" key="1">
    <source>
        <dbReference type="HAMAP-Rule" id="MF_00086"/>
    </source>
</evidence>
<organism>
    <name type="scientific">Sulfurimonas denitrificans (strain ATCC 33889 / DSM 1251)</name>
    <name type="common">Thiomicrospira denitrificans (strain ATCC 33889 / DSM 1251)</name>
    <dbReference type="NCBI Taxonomy" id="326298"/>
    <lineage>
        <taxon>Bacteria</taxon>
        <taxon>Pseudomonadati</taxon>
        <taxon>Campylobacterota</taxon>
        <taxon>Epsilonproteobacteria</taxon>
        <taxon>Campylobacterales</taxon>
        <taxon>Sulfurimonadaceae</taxon>
        <taxon>Sulfurimonas</taxon>
    </lineage>
</organism>
<dbReference type="EC" id="2.5.1.6" evidence="1"/>
<dbReference type="EMBL" id="CP000153">
    <property type="protein sequence ID" value="ABB45051.1"/>
    <property type="molecule type" value="Genomic_DNA"/>
</dbReference>
<dbReference type="RefSeq" id="WP_011373391.1">
    <property type="nucleotide sequence ID" value="NC_007575.1"/>
</dbReference>
<dbReference type="SMR" id="Q30PN0"/>
<dbReference type="STRING" id="326298.Suden_1777"/>
<dbReference type="KEGG" id="tdn:Suden_1777"/>
<dbReference type="eggNOG" id="COG0192">
    <property type="taxonomic scope" value="Bacteria"/>
</dbReference>
<dbReference type="HOGENOM" id="CLU_041802_1_1_7"/>
<dbReference type="OrthoDB" id="9801686at2"/>
<dbReference type="UniPathway" id="UPA00315">
    <property type="reaction ID" value="UER00080"/>
</dbReference>
<dbReference type="Proteomes" id="UP000002714">
    <property type="component" value="Chromosome"/>
</dbReference>
<dbReference type="GO" id="GO:0005737">
    <property type="term" value="C:cytoplasm"/>
    <property type="evidence" value="ECO:0007669"/>
    <property type="project" value="UniProtKB-SubCell"/>
</dbReference>
<dbReference type="GO" id="GO:0005524">
    <property type="term" value="F:ATP binding"/>
    <property type="evidence" value="ECO:0007669"/>
    <property type="project" value="UniProtKB-UniRule"/>
</dbReference>
<dbReference type="GO" id="GO:0000287">
    <property type="term" value="F:magnesium ion binding"/>
    <property type="evidence" value="ECO:0007669"/>
    <property type="project" value="UniProtKB-UniRule"/>
</dbReference>
<dbReference type="GO" id="GO:0004478">
    <property type="term" value="F:methionine adenosyltransferase activity"/>
    <property type="evidence" value="ECO:0007669"/>
    <property type="project" value="UniProtKB-UniRule"/>
</dbReference>
<dbReference type="GO" id="GO:0006730">
    <property type="term" value="P:one-carbon metabolic process"/>
    <property type="evidence" value="ECO:0007669"/>
    <property type="project" value="UniProtKB-KW"/>
</dbReference>
<dbReference type="GO" id="GO:0006556">
    <property type="term" value="P:S-adenosylmethionine biosynthetic process"/>
    <property type="evidence" value="ECO:0007669"/>
    <property type="project" value="UniProtKB-UniRule"/>
</dbReference>
<dbReference type="CDD" id="cd18079">
    <property type="entry name" value="S-AdoMet_synt"/>
    <property type="match status" value="1"/>
</dbReference>
<dbReference type="FunFam" id="3.30.300.10:FF:000003">
    <property type="entry name" value="S-adenosylmethionine synthase"/>
    <property type="match status" value="1"/>
</dbReference>
<dbReference type="Gene3D" id="3.30.300.10">
    <property type="match status" value="3"/>
</dbReference>
<dbReference type="HAMAP" id="MF_00086">
    <property type="entry name" value="S_AdoMet_synth1"/>
    <property type="match status" value="1"/>
</dbReference>
<dbReference type="InterPro" id="IPR022631">
    <property type="entry name" value="ADOMET_SYNTHASE_CS"/>
</dbReference>
<dbReference type="InterPro" id="IPR022630">
    <property type="entry name" value="S-AdoMet_synt_C"/>
</dbReference>
<dbReference type="InterPro" id="IPR022629">
    <property type="entry name" value="S-AdoMet_synt_central"/>
</dbReference>
<dbReference type="InterPro" id="IPR022628">
    <property type="entry name" value="S-AdoMet_synt_N"/>
</dbReference>
<dbReference type="InterPro" id="IPR002133">
    <property type="entry name" value="S-AdoMet_synthetase"/>
</dbReference>
<dbReference type="InterPro" id="IPR022636">
    <property type="entry name" value="S-AdoMet_synthetase_sfam"/>
</dbReference>
<dbReference type="NCBIfam" id="TIGR01034">
    <property type="entry name" value="metK"/>
    <property type="match status" value="1"/>
</dbReference>
<dbReference type="PANTHER" id="PTHR11964">
    <property type="entry name" value="S-ADENOSYLMETHIONINE SYNTHETASE"/>
    <property type="match status" value="1"/>
</dbReference>
<dbReference type="Pfam" id="PF02773">
    <property type="entry name" value="S-AdoMet_synt_C"/>
    <property type="match status" value="1"/>
</dbReference>
<dbReference type="Pfam" id="PF02772">
    <property type="entry name" value="S-AdoMet_synt_M"/>
    <property type="match status" value="1"/>
</dbReference>
<dbReference type="Pfam" id="PF00438">
    <property type="entry name" value="S-AdoMet_synt_N"/>
    <property type="match status" value="1"/>
</dbReference>
<dbReference type="PIRSF" id="PIRSF000497">
    <property type="entry name" value="MAT"/>
    <property type="match status" value="1"/>
</dbReference>
<dbReference type="SUPFAM" id="SSF55973">
    <property type="entry name" value="S-adenosylmethionine synthetase"/>
    <property type="match status" value="3"/>
</dbReference>
<dbReference type="PROSITE" id="PS00376">
    <property type="entry name" value="ADOMET_SYNTHASE_1"/>
    <property type="match status" value="1"/>
</dbReference>
<dbReference type="PROSITE" id="PS00377">
    <property type="entry name" value="ADOMET_SYNTHASE_2"/>
    <property type="match status" value="1"/>
</dbReference>
<reference key="1">
    <citation type="journal article" date="2008" name="Appl. Environ. Microbiol.">
        <title>Genome of the epsilonproteobacterial chemolithoautotroph Sulfurimonas denitrificans.</title>
        <authorList>
            <person name="Sievert S.M."/>
            <person name="Scott K.M."/>
            <person name="Klotz M.G."/>
            <person name="Chain P.S.G."/>
            <person name="Hauser L.J."/>
            <person name="Hemp J."/>
            <person name="Huegler M."/>
            <person name="Land M."/>
            <person name="Lapidus A."/>
            <person name="Larimer F.W."/>
            <person name="Lucas S."/>
            <person name="Malfatti S.A."/>
            <person name="Meyer F."/>
            <person name="Paulsen I.T."/>
            <person name="Ren Q."/>
            <person name="Simon J."/>
            <person name="Bailey K."/>
            <person name="Diaz E."/>
            <person name="Fitzpatrick K.A."/>
            <person name="Glover B."/>
            <person name="Gwatney N."/>
            <person name="Korajkic A."/>
            <person name="Long A."/>
            <person name="Mobberley J.M."/>
            <person name="Pantry S.N."/>
            <person name="Pazder G."/>
            <person name="Peterson S."/>
            <person name="Quintanilla J.D."/>
            <person name="Sprinkle R."/>
            <person name="Stephens J."/>
            <person name="Thomas P."/>
            <person name="Vaughn R."/>
            <person name="Weber M.J."/>
            <person name="Wooten L.L."/>
        </authorList>
    </citation>
    <scope>NUCLEOTIDE SEQUENCE [LARGE SCALE GENOMIC DNA]</scope>
    <source>
        <strain>ATCC 33889 / DSM 1251</strain>
    </source>
</reference>
<feature type="chain" id="PRO_0000241056" description="S-adenosylmethionine synthase">
    <location>
        <begin position="1"/>
        <end position="392"/>
    </location>
</feature>
<feature type="region of interest" description="Flexible loop" evidence="1">
    <location>
        <begin position="106"/>
        <end position="116"/>
    </location>
</feature>
<feature type="binding site" description="in other chain" evidence="1">
    <location>
        <position position="22"/>
    </location>
    <ligand>
        <name>ATP</name>
        <dbReference type="ChEBI" id="CHEBI:30616"/>
        <note>ligand shared between two neighboring subunits</note>
    </ligand>
</feature>
<feature type="binding site" evidence="1">
    <location>
        <position position="24"/>
    </location>
    <ligand>
        <name>Mg(2+)</name>
        <dbReference type="ChEBI" id="CHEBI:18420"/>
    </ligand>
</feature>
<feature type="binding site" evidence="1">
    <location>
        <position position="50"/>
    </location>
    <ligand>
        <name>K(+)</name>
        <dbReference type="ChEBI" id="CHEBI:29103"/>
    </ligand>
</feature>
<feature type="binding site" description="in other chain" evidence="1">
    <location>
        <position position="63"/>
    </location>
    <ligand>
        <name>L-methionine</name>
        <dbReference type="ChEBI" id="CHEBI:57844"/>
        <note>ligand shared between two neighboring subunits</note>
    </ligand>
</feature>
<feature type="binding site" description="in other chain" evidence="1">
    <location>
        <position position="106"/>
    </location>
    <ligand>
        <name>L-methionine</name>
        <dbReference type="ChEBI" id="CHEBI:57844"/>
        <note>ligand shared between two neighboring subunits</note>
    </ligand>
</feature>
<feature type="binding site" description="in other chain" evidence="1">
    <location>
        <begin position="170"/>
        <end position="172"/>
    </location>
    <ligand>
        <name>ATP</name>
        <dbReference type="ChEBI" id="CHEBI:30616"/>
        <note>ligand shared between two neighboring subunits</note>
    </ligand>
</feature>
<feature type="binding site" description="in other chain" evidence="1">
    <location>
        <begin position="236"/>
        <end position="237"/>
    </location>
    <ligand>
        <name>ATP</name>
        <dbReference type="ChEBI" id="CHEBI:30616"/>
        <note>ligand shared between two neighboring subunits</note>
    </ligand>
</feature>
<feature type="binding site" evidence="1">
    <location>
        <position position="245"/>
    </location>
    <ligand>
        <name>ATP</name>
        <dbReference type="ChEBI" id="CHEBI:30616"/>
        <note>ligand shared between two neighboring subunits</note>
    </ligand>
</feature>
<feature type="binding site" evidence="1">
    <location>
        <position position="245"/>
    </location>
    <ligand>
        <name>L-methionine</name>
        <dbReference type="ChEBI" id="CHEBI:57844"/>
        <note>ligand shared between two neighboring subunits</note>
    </ligand>
</feature>
<feature type="binding site" description="in other chain" evidence="1">
    <location>
        <begin position="251"/>
        <end position="252"/>
    </location>
    <ligand>
        <name>ATP</name>
        <dbReference type="ChEBI" id="CHEBI:30616"/>
        <note>ligand shared between two neighboring subunits</note>
    </ligand>
</feature>
<feature type="binding site" evidence="1">
    <location>
        <position position="268"/>
    </location>
    <ligand>
        <name>ATP</name>
        <dbReference type="ChEBI" id="CHEBI:30616"/>
        <note>ligand shared between two neighboring subunits</note>
    </ligand>
</feature>
<feature type="binding site" evidence="1">
    <location>
        <position position="272"/>
    </location>
    <ligand>
        <name>ATP</name>
        <dbReference type="ChEBI" id="CHEBI:30616"/>
        <note>ligand shared between two neighboring subunits</note>
    </ligand>
</feature>
<feature type="binding site" description="in other chain" evidence="1">
    <location>
        <position position="276"/>
    </location>
    <ligand>
        <name>L-methionine</name>
        <dbReference type="ChEBI" id="CHEBI:57844"/>
        <note>ligand shared between two neighboring subunits</note>
    </ligand>
</feature>
<proteinExistence type="inferred from homology"/>
<gene>
    <name evidence="1" type="primary">metK</name>
    <name type="ordered locus">Suden_1777</name>
</gene>
<keyword id="KW-0067">ATP-binding</keyword>
<keyword id="KW-0963">Cytoplasm</keyword>
<keyword id="KW-0460">Magnesium</keyword>
<keyword id="KW-0479">Metal-binding</keyword>
<keyword id="KW-0547">Nucleotide-binding</keyword>
<keyword id="KW-0554">One-carbon metabolism</keyword>
<keyword id="KW-0630">Potassium</keyword>
<keyword id="KW-1185">Reference proteome</keyword>
<keyword id="KW-0808">Transferase</keyword>
<accession>Q30PN0</accession>
<protein>
    <recommendedName>
        <fullName evidence="1">S-adenosylmethionine synthase</fullName>
        <shortName evidence="1">AdoMet synthase</shortName>
        <ecNumber evidence="1">2.5.1.6</ecNumber>
    </recommendedName>
    <alternativeName>
        <fullName evidence="1">MAT</fullName>
    </alternativeName>
    <alternativeName>
        <fullName evidence="1">Methionine adenosyltransferase</fullName>
    </alternativeName>
</protein>
<name>METK_SULDN</name>
<comment type="function">
    <text evidence="1">Catalyzes the formation of S-adenosylmethionine (AdoMet) from methionine and ATP. The overall synthetic reaction is composed of two sequential steps, AdoMet formation and the subsequent tripolyphosphate hydrolysis which occurs prior to release of AdoMet from the enzyme.</text>
</comment>
<comment type="catalytic activity">
    <reaction evidence="1">
        <text>L-methionine + ATP + H2O = S-adenosyl-L-methionine + phosphate + diphosphate</text>
        <dbReference type="Rhea" id="RHEA:21080"/>
        <dbReference type="ChEBI" id="CHEBI:15377"/>
        <dbReference type="ChEBI" id="CHEBI:30616"/>
        <dbReference type="ChEBI" id="CHEBI:33019"/>
        <dbReference type="ChEBI" id="CHEBI:43474"/>
        <dbReference type="ChEBI" id="CHEBI:57844"/>
        <dbReference type="ChEBI" id="CHEBI:59789"/>
        <dbReference type="EC" id="2.5.1.6"/>
    </reaction>
</comment>
<comment type="cofactor">
    <cofactor evidence="1">
        <name>Mg(2+)</name>
        <dbReference type="ChEBI" id="CHEBI:18420"/>
    </cofactor>
    <text evidence="1">Binds 2 divalent ions per subunit.</text>
</comment>
<comment type="cofactor">
    <cofactor evidence="1">
        <name>K(+)</name>
        <dbReference type="ChEBI" id="CHEBI:29103"/>
    </cofactor>
    <text evidence="1">Binds 1 potassium ion per subunit.</text>
</comment>
<comment type="pathway">
    <text evidence="1">Amino-acid biosynthesis; S-adenosyl-L-methionine biosynthesis; S-adenosyl-L-methionine from L-methionine: step 1/1.</text>
</comment>
<comment type="subunit">
    <text evidence="1">Homotetramer; dimer of dimers.</text>
</comment>
<comment type="subcellular location">
    <subcellularLocation>
        <location evidence="1">Cytoplasm</location>
    </subcellularLocation>
</comment>
<comment type="similarity">
    <text evidence="1">Belongs to the AdoMet synthase family.</text>
</comment>
<sequence>MTKEEKTLKEYIFTSESVTEGHPDKMADQISDAILDYIIEHDPSAHVACETLVSNGFCVIAGELKTTAYAPMQEIVRRVVQEIGYTDATYGFDYRSAAVLNGIGEQSPDITQGVTLLDGEIGAGDQGLMFGYACRETDVLMPLPIYLAHLLTRRLAEVRKEGIIPYLRPDGKAQISVKYIGDKPVSVEAVVVSTQHAPEVSQEKIREDVIRDVIRAVIPAELMSEKTLFHINPTGKFVIGGPQGDAGLTGRKIIVDTYGGSCPHGGGAFSGKDPTKVDRSAAYACRHVAKNLVAAGVCDRVTIQIAYAIGISAPVSIMIDTHNTAIVEEKKIESCVKELFDLTPKGIIKSLDLLRPIYRKTAVYGHFGREEEGFTWELTNRVEDIKKYLKIN</sequence>